<comment type="function">
    <text evidence="1">N-acetylglucosamine-induced protein which plays a role in the N-acetylglucosamine metabolic pathway.</text>
</comment>
<comment type="subcellular location">
    <subcellularLocation>
        <location evidence="1">Cytoplasm</location>
    </subcellularLocation>
</comment>
<comment type="induction">
    <text evidence="1 2">Expression is induced by N-acetylglucosamine (GlcNAc).</text>
</comment>
<comment type="disruption phenotype">
    <text evidence="1">Leads to increased resistance to the chitin synthase inhibitor nikkomycin Z.</text>
</comment>
<keyword id="KW-0963">Cytoplasm</keyword>
<keyword id="KW-1185">Reference proteome</keyword>
<dbReference type="EMBL" id="CP017623">
    <property type="protein sequence ID" value="AOW26105.1"/>
    <property type="molecule type" value="Genomic_DNA"/>
</dbReference>
<dbReference type="RefSeq" id="XP_713670.1">
    <property type="nucleotide sequence ID" value="XM_708577.1"/>
</dbReference>
<dbReference type="SMR" id="Q59VM7"/>
<dbReference type="FunCoup" id="Q59VM7">
    <property type="interactions" value="2"/>
</dbReference>
<dbReference type="STRING" id="237561.Q59VM7"/>
<dbReference type="EnsemblFungi" id="C1_04310C_A-T">
    <property type="protein sequence ID" value="C1_04310C_A-T-p1"/>
    <property type="gene ID" value="C1_04310C_A"/>
</dbReference>
<dbReference type="GeneID" id="3644712"/>
<dbReference type="KEGG" id="cal:CAALFM_C104310CA"/>
<dbReference type="CGD" id="CAL0000193934">
    <property type="gene designation" value="GIG1"/>
</dbReference>
<dbReference type="VEuPathDB" id="FungiDB:C1_04310C_A"/>
<dbReference type="eggNOG" id="ENOG502S263">
    <property type="taxonomic scope" value="Eukaryota"/>
</dbReference>
<dbReference type="HOGENOM" id="CLU_075862_2_0_1"/>
<dbReference type="InParanoid" id="Q59VM7"/>
<dbReference type="OrthoDB" id="10053431at2759"/>
<dbReference type="PRO" id="PR:Q59VM7"/>
<dbReference type="Proteomes" id="UP000000559">
    <property type="component" value="Chromosome 1"/>
</dbReference>
<dbReference type="GO" id="GO:0005737">
    <property type="term" value="C:cytoplasm"/>
    <property type="evidence" value="ECO:0000314"/>
    <property type="project" value="CGD"/>
</dbReference>
<dbReference type="GO" id="GO:0006044">
    <property type="term" value="P:N-acetylglucosamine metabolic process"/>
    <property type="evidence" value="ECO:0000315"/>
    <property type="project" value="CGD"/>
</dbReference>
<dbReference type="InterPro" id="IPR022036">
    <property type="entry name" value="DUF3605"/>
</dbReference>
<dbReference type="PANTHER" id="PTHR35020">
    <property type="entry name" value="N-ACETYLGLUCOSAMINE-INDUCED PROTEIN 1"/>
    <property type="match status" value="1"/>
</dbReference>
<dbReference type="PANTHER" id="PTHR35020:SF2">
    <property type="entry name" value="N-ACETYLGLUCOSAMINE-INDUCED PROTEIN 1"/>
    <property type="match status" value="1"/>
</dbReference>
<dbReference type="Pfam" id="PF12239">
    <property type="entry name" value="DUF3605"/>
    <property type="match status" value="1"/>
</dbReference>
<accession>Q59VM7</accession>
<accession>A0A1D8PD91</accession>
<organism>
    <name type="scientific">Candida albicans (strain SC5314 / ATCC MYA-2876)</name>
    <name type="common">Yeast</name>
    <dbReference type="NCBI Taxonomy" id="237561"/>
    <lineage>
        <taxon>Eukaryota</taxon>
        <taxon>Fungi</taxon>
        <taxon>Dikarya</taxon>
        <taxon>Ascomycota</taxon>
        <taxon>Saccharomycotina</taxon>
        <taxon>Pichiomycetes</taxon>
        <taxon>Debaryomycetaceae</taxon>
        <taxon>Candida/Lodderomyces clade</taxon>
        <taxon>Candida</taxon>
    </lineage>
</organism>
<name>GIG1_CANAL</name>
<protein>
    <recommendedName>
        <fullName evidence="3">N-acetylglucosamine-induced protein 1</fullName>
        <shortName evidence="3">GlcNAc-Induced Gene</shortName>
    </recommendedName>
</protein>
<evidence type="ECO:0000269" key="1">
    <source>
    </source>
</evidence>
<evidence type="ECO:0000269" key="2">
    <source>
    </source>
</evidence>
<evidence type="ECO:0000303" key="3">
    <source>
    </source>
</evidence>
<feature type="chain" id="PRO_0000431723" description="N-acetylglucosamine-induced protein 1">
    <location>
        <begin position="1"/>
        <end position="254"/>
    </location>
</feature>
<proteinExistence type="evidence at transcript level"/>
<reference key="1">
    <citation type="journal article" date="2004" name="Proc. Natl. Acad. Sci. U.S.A.">
        <title>The diploid genome sequence of Candida albicans.</title>
        <authorList>
            <person name="Jones T."/>
            <person name="Federspiel N.A."/>
            <person name="Chibana H."/>
            <person name="Dungan J."/>
            <person name="Kalman S."/>
            <person name="Magee B.B."/>
            <person name="Newport G."/>
            <person name="Thorstenson Y.R."/>
            <person name="Agabian N."/>
            <person name="Magee P.T."/>
            <person name="Davis R.W."/>
            <person name="Scherer S."/>
        </authorList>
    </citation>
    <scope>NUCLEOTIDE SEQUENCE [LARGE SCALE GENOMIC DNA]</scope>
    <source>
        <strain>SC5314 / ATCC MYA-2876</strain>
    </source>
</reference>
<reference key="2">
    <citation type="journal article" date="2007" name="Genome Biol.">
        <title>Assembly of the Candida albicans genome into sixteen supercontigs aligned on the eight chromosomes.</title>
        <authorList>
            <person name="van het Hoog M."/>
            <person name="Rast T.J."/>
            <person name="Martchenko M."/>
            <person name="Grindle S."/>
            <person name="Dignard D."/>
            <person name="Hogues H."/>
            <person name="Cuomo C."/>
            <person name="Berriman M."/>
            <person name="Scherer S."/>
            <person name="Magee B.B."/>
            <person name="Whiteway M."/>
            <person name="Chibana H."/>
            <person name="Nantel A."/>
            <person name="Magee P.T."/>
        </authorList>
    </citation>
    <scope>GENOME REANNOTATION</scope>
    <source>
        <strain>SC5314 / ATCC MYA-2876</strain>
    </source>
</reference>
<reference key="3">
    <citation type="journal article" date="2013" name="Genome Biol.">
        <title>Assembly of a phased diploid Candida albicans genome facilitates allele-specific measurements and provides a simple model for repeat and indel structure.</title>
        <authorList>
            <person name="Muzzey D."/>
            <person name="Schwartz K."/>
            <person name="Weissman J.S."/>
            <person name="Sherlock G."/>
        </authorList>
    </citation>
    <scope>NUCLEOTIDE SEQUENCE [LARGE SCALE GENOMIC DNA]</scope>
    <scope>GENOME REANNOTATION</scope>
    <source>
        <strain>SC5314 / ATCC MYA-2876</strain>
    </source>
</reference>
<reference key="4">
    <citation type="journal article" date="2010" name="Eukaryot. Cell">
        <title>Identification of GIG1, a GlcNAc-induced gene in Candida albicans needed for normal sensitivity to the chitin synthase inhibitor nikkomycin Z.</title>
        <authorList>
            <person name="Gunasekera A."/>
            <person name="Alvarez F.J."/>
            <person name="Douglas L.M."/>
            <person name="Wang H.X."/>
            <person name="Rosebrock A.P."/>
            <person name="Konopka J.B."/>
        </authorList>
    </citation>
    <scope>INDUCTION</scope>
    <scope>SUBCELLULAR LOCATION</scope>
    <scope>DISRUPTION PHENOTYPE</scope>
    <scope>FUNCTION</scope>
</reference>
<reference key="5">
    <citation type="journal article" date="2011" name="J. Biol. Chem.">
        <title>N-acetylglucosamine (GlcNAc) induction of hyphal morphogenesis and transcriptional responses in Candida albicans are not dependent on its metabolism.</title>
        <authorList>
            <person name="Naseem S."/>
            <person name="Gunasekera A."/>
            <person name="Araya E."/>
            <person name="Konopka J.B."/>
        </authorList>
    </citation>
    <scope>INDUCTION</scope>
</reference>
<sequence length="254" mass="30127">MNPATIITNFNNSQLQTPPTSPVSFDKYYTYYNIQLEQSTLMPQPSKIKNGDPFTWSDIQFIIKSNQLEIFARSRQQTIKYHKFKQWLKDNKLSINDYLLDYELHWKESELREQQHELVSDKEYSIDYPEDLIFHNPNDISILYNKFPYYFEPNVKHICIWSKLKIPVDKNSEVGDISVMTKKLINRYLEKTFVAKGISWDQIVWFKNWLSLQSVRSISHIHVILKDVDDKFVDELISGGSGEVLTLDDYRNLE</sequence>
<gene>
    <name evidence="3" type="primary">GIG1</name>
    <name type="ordered locus">CAALFM_C104310CA</name>
    <name type="ORF">CaO19.1066</name>
    <name type="ORF">CaO19.8668</name>
</gene>